<gene>
    <name type="primary">srg-69</name>
    <name type="ORF">F09E5.4</name>
</gene>
<reference key="1">
    <citation type="journal article" date="1998" name="Science">
        <title>Genome sequence of the nematode C. elegans: a platform for investigating biology.</title>
        <authorList>
            <consortium name="The C. elegans sequencing consortium"/>
        </authorList>
    </citation>
    <scope>NUCLEOTIDE SEQUENCE [LARGE SCALE GENOMIC DNA]</scope>
    <source>
        <strain>Bristol N2</strain>
    </source>
</reference>
<comment type="subcellular location">
    <subcellularLocation>
        <location evidence="2">Membrane</location>
        <topology evidence="2">Multi-pass membrane protein</topology>
    </subcellularLocation>
</comment>
<comment type="similarity">
    <text evidence="2">Belongs to the nematode receptor-like protein srg family.</text>
</comment>
<evidence type="ECO:0000255" key="1"/>
<evidence type="ECO:0000305" key="2"/>
<dbReference type="EMBL" id="FO081044">
    <property type="protein sequence ID" value="CCD68757.1"/>
    <property type="molecule type" value="Genomic_DNA"/>
</dbReference>
<dbReference type="RefSeq" id="NP_001364743.1">
    <property type="nucleotide sequence ID" value="NM_001377800.1"/>
</dbReference>
<dbReference type="RefSeq" id="NP_872070.1">
    <property type="nucleotide sequence ID" value="NM_182270.1"/>
</dbReference>
<dbReference type="SMR" id="Q19258"/>
<dbReference type="FunCoup" id="Q19258">
    <property type="interactions" value="811"/>
</dbReference>
<dbReference type="PaxDb" id="6239-F09E5.4"/>
<dbReference type="EnsemblMetazoa" id="F09E5.4.1">
    <property type="protein sequence ID" value="F09E5.4.1"/>
    <property type="gene ID" value="WBGene00005226"/>
</dbReference>
<dbReference type="GeneID" id="353477"/>
<dbReference type="UCSC" id="F09E5.4">
    <property type="organism name" value="c. elegans"/>
</dbReference>
<dbReference type="AGR" id="WB:WBGene00005226"/>
<dbReference type="WormBase" id="F09E5.4">
    <property type="protein sequence ID" value="CE33282"/>
    <property type="gene ID" value="WBGene00005226"/>
    <property type="gene designation" value="srg-69"/>
</dbReference>
<dbReference type="eggNOG" id="KOG4357">
    <property type="taxonomic scope" value="Eukaryota"/>
</dbReference>
<dbReference type="GeneTree" id="ENSGT00970000195841"/>
<dbReference type="HOGENOM" id="CLU_811948_0_0_1"/>
<dbReference type="InParanoid" id="Q19258"/>
<dbReference type="OMA" id="IPLIFMW"/>
<dbReference type="OrthoDB" id="5788001at2759"/>
<dbReference type="PhylomeDB" id="Q19258"/>
<dbReference type="PRO" id="PR:Q19258"/>
<dbReference type="Proteomes" id="UP000001940">
    <property type="component" value="Chromosome II"/>
</dbReference>
<dbReference type="Bgee" id="WBGene00005226">
    <property type="expression patterns" value="Expressed in larva and 1 other cell type or tissue"/>
</dbReference>
<dbReference type="GO" id="GO:0016020">
    <property type="term" value="C:membrane"/>
    <property type="evidence" value="ECO:0007669"/>
    <property type="project" value="UniProtKB-SubCell"/>
</dbReference>
<dbReference type="GO" id="GO:0004888">
    <property type="term" value="F:transmembrane signaling receptor activity"/>
    <property type="evidence" value="ECO:0007669"/>
    <property type="project" value="InterPro"/>
</dbReference>
<dbReference type="GO" id="GO:0007606">
    <property type="term" value="P:sensory perception of chemical stimulus"/>
    <property type="evidence" value="ECO:0007669"/>
    <property type="project" value="InterPro"/>
</dbReference>
<dbReference type="InterPro" id="IPR000609">
    <property type="entry name" value="7TM_GPCR_serpentine_rcpt_Srg"/>
</dbReference>
<dbReference type="InterPro" id="IPR051119">
    <property type="entry name" value="Nematode_SR-like"/>
</dbReference>
<dbReference type="PANTHER" id="PTHR31627:SF16">
    <property type="entry name" value="SERPENTINE RECEPTOR CLASS GAMMA-69"/>
    <property type="match status" value="1"/>
</dbReference>
<dbReference type="PANTHER" id="PTHR31627">
    <property type="entry name" value="SERPENTINE RECEPTOR CLASS GAMMA-RELATED"/>
    <property type="match status" value="1"/>
</dbReference>
<dbReference type="Pfam" id="PF02118">
    <property type="entry name" value="Srg"/>
    <property type="match status" value="1"/>
</dbReference>
<sequence>MNSCHPPQDEMAGLIGIYAFQGFYGLLSVVVYTFNIRALRHHKNNLDKSFSLLYTCCAALSLTYFLDHFLIRRFVKLGFFCEIILENFGEPNYWMMPYKTIASYCPIAILVFHALIAAHRFSIVAAPMRGVQLWDRYRRLFVLVGFLIPLIFMWFMIPCKSYAELDSEGSGGLDIEYKKVFSISSSLAAAIAAVLFGVLTLCLTFGMLIALAKLSLRKLSQAEISLIVFEVFMTVFTLIYAFTQGILYYSIYIVKDMELKSTVIQFRTFAIDIFILPQAWTLLFLSTTVRRYTLRAFGKRLGVEFLSTEIEKSARMVSVAPATISLQKSTVLNYNFTLQNLF</sequence>
<organism>
    <name type="scientific">Caenorhabditis elegans</name>
    <dbReference type="NCBI Taxonomy" id="6239"/>
    <lineage>
        <taxon>Eukaryota</taxon>
        <taxon>Metazoa</taxon>
        <taxon>Ecdysozoa</taxon>
        <taxon>Nematoda</taxon>
        <taxon>Chromadorea</taxon>
        <taxon>Rhabditida</taxon>
        <taxon>Rhabditina</taxon>
        <taxon>Rhabditomorpha</taxon>
        <taxon>Rhabditoidea</taxon>
        <taxon>Rhabditidae</taxon>
        <taxon>Peloderinae</taxon>
        <taxon>Caenorhabditis</taxon>
    </lineage>
</organism>
<keyword id="KW-0472">Membrane</keyword>
<keyword id="KW-1185">Reference proteome</keyword>
<keyword id="KW-0812">Transmembrane</keyword>
<keyword id="KW-1133">Transmembrane helix</keyword>
<protein>
    <recommendedName>
        <fullName>Serpentine receptor class gamma-69</fullName>
        <shortName>Protein srg-69</shortName>
    </recommendedName>
</protein>
<feature type="chain" id="PRO_0000104574" description="Serpentine receptor class gamma-69">
    <location>
        <begin position="1"/>
        <end position="342"/>
    </location>
</feature>
<feature type="transmembrane region" description="Helical" evidence="1">
    <location>
        <begin position="11"/>
        <end position="31"/>
    </location>
</feature>
<feature type="transmembrane region" description="Helical" evidence="1">
    <location>
        <begin position="51"/>
        <end position="71"/>
    </location>
</feature>
<feature type="transmembrane region" description="Helical" evidence="1">
    <location>
        <begin position="106"/>
        <end position="126"/>
    </location>
</feature>
<feature type="transmembrane region" description="Helical" evidence="1">
    <location>
        <begin position="140"/>
        <end position="160"/>
    </location>
</feature>
<feature type="transmembrane region" description="Helical" evidence="1">
    <location>
        <begin position="191"/>
        <end position="211"/>
    </location>
</feature>
<feature type="transmembrane region" description="Helical" evidence="1">
    <location>
        <begin position="222"/>
        <end position="242"/>
    </location>
</feature>
<feature type="transmembrane region" description="Helical" evidence="1">
    <location>
        <begin position="269"/>
        <end position="289"/>
    </location>
</feature>
<proteinExistence type="inferred from homology"/>
<name>SRG69_CAEEL</name>
<accession>Q19258</accession>